<feature type="chain" id="PRO_5000147478" description="Myosin-5">
    <location>
        <begin position="1"/>
        <end position="1520"/>
    </location>
</feature>
<feature type="domain" description="Myosin N-terminal SH3-like" evidence="6">
    <location>
        <begin position="7"/>
        <end position="56"/>
    </location>
</feature>
<feature type="domain" description="Myosin motor" evidence="5">
    <location>
        <begin position="59"/>
        <end position="729"/>
    </location>
</feature>
<feature type="domain" description="IQ 1" evidence="3">
    <location>
        <begin position="732"/>
        <end position="761"/>
    </location>
</feature>
<feature type="domain" description="IQ 2" evidence="3">
    <location>
        <begin position="755"/>
        <end position="784"/>
    </location>
</feature>
<feature type="domain" description="IQ 3" evidence="3">
    <location>
        <begin position="780"/>
        <end position="809"/>
    </location>
</feature>
<feature type="domain" description="IQ 4" evidence="3">
    <location>
        <begin position="803"/>
        <end position="832"/>
    </location>
</feature>
<feature type="domain" description="IQ 5" evidence="3">
    <location>
        <begin position="828"/>
        <end position="857"/>
    </location>
</feature>
<feature type="domain" description="IQ 6" evidence="3">
    <location>
        <begin position="851"/>
        <end position="880"/>
    </location>
</feature>
<feature type="domain" description="Dilute" evidence="4">
    <location>
        <begin position="1148"/>
        <end position="1463"/>
    </location>
</feature>
<feature type="region of interest" description="Actin-binding" evidence="2">
    <location>
        <begin position="492"/>
        <end position="526"/>
    </location>
</feature>
<feature type="region of interest" description="Actin-binding" evidence="2">
    <location>
        <begin position="528"/>
        <end position="551"/>
    </location>
</feature>
<feature type="region of interest" description="Actin-binding" evidence="2">
    <location>
        <begin position="586"/>
        <end position="610"/>
    </location>
</feature>
<feature type="region of interest" description="Actin-binding" evidence="1">
    <location>
        <begin position="610"/>
        <end position="632"/>
    </location>
</feature>
<feature type="region of interest" description="Disordered" evidence="7">
    <location>
        <begin position="1062"/>
        <end position="1100"/>
    </location>
</feature>
<feature type="coiled-coil region" evidence="2">
    <location>
        <begin position="881"/>
        <end position="1047"/>
    </location>
</feature>
<feature type="compositionally biased region" description="Polar residues" evidence="7">
    <location>
        <begin position="1076"/>
        <end position="1086"/>
    </location>
</feature>
<feature type="binding site" evidence="2">
    <location>
        <begin position="153"/>
        <end position="160"/>
    </location>
    <ligand>
        <name>ATP</name>
        <dbReference type="ChEBI" id="CHEBI:30616"/>
    </ligand>
</feature>
<feature type="binding site" evidence="2">
    <location>
        <begin position="206"/>
        <end position="214"/>
    </location>
    <ligand>
        <name>ATP</name>
        <dbReference type="ChEBI" id="CHEBI:30616"/>
    </ligand>
</feature>
<gene>
    <name type="primary">XI-1</name>
    <name type="synonym">MYA1</name>
    <name type="ordered locus">At1g17580</name>
    <name type="ORF">F1L3.28</name>
</gene>
<keyword id="KW-0009">Actin-binding</keyword>
<keyword id="KW-0067">ATP-binding</keyword>
<keyword id="KW-0112">Calmodulin-binding</keyword>
<keyword id="KW-0175">Coiled coil</keyword>
<keyword id="KW-0963">Cytoplasm</keyword>
<keyword id="KW-0505">Motor protein</keyword>
<keyword id="KW-0518">Myosin</keyword>
<keyword id="KW-0547">Nucleotide-binding</keyword>
<keyword id="KW-1185">Reference proteome</keyword>
<keyword id="KW-0677">Repeat</keyword>
<evidence type="ECO:0000250" key="1"/>
<evidence type="ECO:0000255" key="2"/>
<evidence type="ECO:0000255" key="3">
    <source>
        <dbReference type="PROSITE-ProRule" id="PRU00116"/>
    </source>
</evidence>
<evidence type="ECO:0000255" key="4">
    <source>
        <dbReference type="PROSITE-ProRule" id="PRU00503"/>
    </source>
</evidence>
<evidence type="ECO:0000255" key="5">
    <source>
        <dbReference type="PROSITE-ProRule" id="PRU00782"/>
    </source>
</evidence>
<evidence type="ECO:0000255" key="6">
    <source>
        <dbReference type="PROSITE-ProRule" id="PRU01190"/>
    </source>
</evidence>
<evidence type="ECO:0000256" key="7">
    <source>
        <dbReference type="SAM" id="MobiDB-lite"/>
    </source>
</evidence>
<evidence type="ECO:0000269" key="8">
    <source>
    </source>
</evidence>
<evidence type="ECO:0000269" key="9">
    <source>
    </source>
</evidence>
<evidence type="ECO:0000269" key="10">
    <source>
    </source>
</evidence>
<evidence type="ECO:0000269" key="11">
    <source>
    </source>
</evidence>
<evidence type="ECO:0000269" key="12">
    <source>
    </source>
</evidence>
<evidence type="ECO:0000269" key="13">
    <source>
    </source>
</evidence>
<evidence type="ECO:0000269" key="14">
    <source>
    </source>
</evidence>
<evidence type="ECO:0000269" key="15">
    <source>
    </source>
</evidence>
<evidence type="ECO:0000269" key="16">
    <source>
    </source>
</evidence>
<evidence type="ECO:0000269" key="17">
    <source>
    </source>
</evidence>
<evidence type="ECO:0000269" key="18">
    <source>
    </source>
</evidence>
<evidence type="ECO:0000269" key="19">
    <source>
    </source>
</evidence>
<evidence type="ECO:0000305" key="20"/>
<dbReference type="EMBL" id="Z28389">
    <property type="protein sequence ID" value="CAA82234.1"/>
    <property type="molecule type" value="mRNA"/>
</dbReference>
<dbReference type="EMBL" id="AC022492">
    <property type="protein sequence ID" value="AAF79470.1"/>
    <property type="status" value="ALT_SEQ"/>
    <property type="molecule type" value="Genomic_DNA"/>
</dbReference>
<dbReference type="EMBL" id="CP002684">
    <property type="protein sequence ID" value="AEE29607.1"/>
    <property type="molecule type" value="Genomic_DNA"/>
</dbReference>
<dbReference type="PIR" id="S46444">
    <property type="entry name" value="S46444"/>
</dbReference>
<dbReference type="RefSeq" id="NP_173201.2">
    <property type="nucleotide sequence ID" value="NM_101620.3"/>
</dbReference>
<dbReference type="SMR" id="Q39160"/>
<dbReference type="BioGRID" id="23573">
    <property type="interactions" value="1"/>
</dbReference>
<dbReference type="FunCoup" id="Q39160">
    <property type="interactions" value="1462"/>
</dbReference>
<dbReference type="IntAct" id="Q39160">
    <property type="interactions" value="1"/>
</dbReference>
<dbReference type="STRING" id="3702.Q39160"/>
<dbReference type="iPTMnet" id="Q39160"/>
<dbReference type="PaxDb" id="3702-AT1G17580.1"/>
<dbReference type="ProteomicsDB" id="251357"/>
<dbReference type="EnsemblPlants" id="AT1G17580.1">
    <property type="protein sequence ID" value="AT1G17580.1"/>
    <property type="gene ID" value="AT1G17580"/>
</dbReference>
<dbReference type="GeneID" id="838333"/>
<dbReference type="Gramene" id="AT1G17580.1">
    <property type="protein sequence ID" value="AT1G17580.1"/>
    <property type="gene ID" value="AT1G17580"/>
</dbReference>
<dbReference type="KEGG" id="ath:AT1G17580"/>
<dbReference type="Araport" id="AT1G17580"/>
<dbReference type="TAIR" id="AT1G17580">
    <property type="gene designation" value="MYA1"/>
</dbReference>
<dbReference type="eggNOG" id="KOG0160">
    <property type="taxonomic scope" value="Eukaryota"/>
</dbReference>
<dbReference type="HOGENOM" id="CLU_000192_3_1_1"/>
<dbReference type="InParanoid" id="Q39160"/>
<dbReference type="OMA" id="TDMMEQY"/>
<dbReference type="OrthoDB" id="6108017at2759"/>
<dbReference type="PhylomeDB" id="Q39160"/>
<dbReference type="PRO" id="PR:Q39160"/>
<dbReference type="Proteomes" id="UP000006548">
    <property type="component" value="Chromosome 1"/>
</dbReference>
<dbReference type="ExpressionAtlas" id="Q39160">
    <property type="expression patterns" value="baseline and differential"/>
</dbReference>
<dbReference type="GO" id="GO:0005737">
    <property type="term" value="C:cytoplasm"/>
    <property type="evidence" value="ECO:0007669"/>
    <property type="project" value="UniProtKB-SubCell"/>
</dbReference>
<dbReference type="GO" id="GO:0016459">
    <property type="term" value="C:myosin complex"/>
    <property type="evidence" value="ECO:0007669"/>
    <property type="project" value="UniProtKB-KW"/>
</dbReference>
<dbReference type="GO" id="GO:0003779">
    <property type="term" value="F:actin binding"/>
    <property type="evidence" value="ECO:0007669"/>
    <property type="project" value="UniProtKB-KW"/>
</dbReference>
<dbReference type="GO" id="GO:0005524">
    <property type="term" value="F:ATP binding"/>
    <property type="evidence" value="ECO:0007669"/>
    <property type="project" value="UniProtKB-KW"/>
</dbReference>
<dbReference type="GO" id="GO:0005516">
    <property type="term" value="F:calmodulin binding"/>
    <property type="evidence" value="ECO:0007669"/>
    <property type="project" value="UniProtKB-KW"/>
</dbReference>
<dbReference type="GO" id="GO:0003774">
    <property type="term" value="F:cytoskeletal motor activity"/>
    <property type="evidence" value="ECO:0000250"/>
    <property type="project" value="TAIR"/>
</dbReference>
<dbReference type="GO" id="GO:0042802">
    <property type="term" value="F:identical protein binding"/>
    <property type="evidence" value="ECO:0000353"/>
    <property type="project" value="IntAct"/>
</dbReference>
<dbReference type="GO" id="GO:0007015">
    <property type="term" value="P:actin filament organization"/>
    <property type="evidence" value="ECO:0007669"/>
    <property type="project" value="InterPro"/>
</dbReference>
<dbReference type="GO" id="GO:0030048">
    <property type="term" value="P:actin filament-based movement"/>
    <property type="evidence" value="ECO:0000304"/>
    <property type="project" value="TAIR"/>
</dbReference>
<dbReference type="GO" id="GO:0051301">
    <property type="term" value="P:cell division"/>
    <property type="evidence" value="ECO:0000316"/>
    <property type="project" value="TAIR"/>
</dbReference>
<dbReference type="GO" id="GO:0010154">
    <property type="term" value="P:fruit development"/>
    <property type="evidence" value="ECO:0000316"/>
    <property type="project" value="TAIR"/>
</dbReference>
<dbReference type="GO" id="GO:0051645">
    <property type="term" value="P:Golgi localization"/>
    <property type="evidence" value="ECO:0000315"/>
    <property type="project" value="TAIR"/>
</dbReference>
<dbReference type="GO" id="GO:0048467">
    <property type="term" value="P:gynoecium development"/>
    <property type="evidence" value="ECO:0000316"/>
    <property type="project" value="TAIR"/>
</dbReference>
<dbReference type="GO" id="GO:0090436">
    <property type="term" value="P:leaf pavement cell development"/>
    <property type="evidence" value="ECO:0000316"/>
    <property type="project" value="TAIR"/>
</dbReference>
<dbReference type="GO" id="GO:0051646">
    <property type="term" value="P:mitochondrion localization"/>
    <property type="evidence" value="ECO:0000316"/>
    <property type="project" value="TAIR"/>
</dbReference>
<dbReference type="GO" id="GO:0060151">
    <property type="term" value="P:peroxisome localization"/>
    <property type="evidence" value="ECO:0000316"/>
    <property type="project" value="TAIR"/>
</dbReference>
<dbReference type="GO" id="GO:0009791">
    <property type="term" value="P:post-embryonic development"/>
    <property type="evidence" value="ECO:0000316"/>
    <property type="project" value="TAIR"/>
</dbReference>
<dbReference type="GO" id="GO:0010090">
    <property type="term" value="P:trichome morphogenesis"/>
    <property type="evidence" value="ECO:0000316"/>
    <property type="project" value="TAIR"/>
</dbReference>
<dbReference type="GO" id="GO:0009826">
    <property type="term" value="P:unidimensional cell growth"/>
    <property type="evidence" value="ECO:0000316"/>
    <property type="project" value="TAIR"/>
</dbReference>
<dbReference type="CDD" id="cd15475">
    <property type="entry name" value="MyosinXI_CBD"/>
    <property type="match status" value="1"/>
</dbReference>
<dbReference type="CDD" id="cd01384">
    <property type="entry name" value="MYSc_Myo11"/>
    <property type="match status" value="1"/>
</dbReference>
<dbReference type="FunFam" id="1.20.58.530:FF:000002">
    <property type="entry name" value="Class V myosin"/>
    <property type="match status" value="1"/>
</dbReference>
<dbReference type="FunFam" id="1.20.120.720:FF:000011">
    <property type="entry name" value="Myosin 2"/>
    <property type="match status" value="1"/>
</dbReference>
<dbReference type="FunFam" id="1.10.10.820:FF:000001">
    <property type="entry name" value="Myosin heavy chain"/>
    <property type="match status" value="1"/>
</dbReference>
<dbReference type="FunFam" id="1.20.5.190:FF:000001">
    <property type="entry name" value="unconventional myosin-Va"/>
    <property type="match status" value="3"/>
</dbReference>
<dbReference type="Gene3D" id="1.10.10.820">
    <property type="match status" value="1"/>
</dbReference>
<dbReference type="Gene3D" id="1.20.5.190">
    <property type="match status" value="3"/>
</dbReference>
<dbReference type="Gene3D" id="1.20.58.530">
    <property type="match status" value="1"/>
</dbReference>
<dbReference type="Gene3D" id="3.30.70.1590">
    <property type="match status" value="1"/>
</dbReference>
<dbReference type="Gene3D" id="3.40.850.10">
    <property type="entry name" value="Kinesin motor domain"/>
    <property type="match status" value="1"/>
</dbReference>
<dbReference type="Gene3D" id="1.20.120.720">
    <property type="entry name" value="Myosin VI head, motor domain, U50 subdomain"/>
    <property type="match status" value="1"/>
</dbReference>
<dbReference type="InterPro" id="IPR002710">
    <property type="entry name" value="Dilute_dom"/>
</dbReference>
<dbReference type="InterPro" id="IPR000048">
    <property type="entry name" value="IQ_motif_EF-hand-BS"/>
</dbReference>
<dbReference type="InterPro" id="IPR036961">
    <property type="entry name" value="Kinesin_motor_dom_sf"/>
</dbReference>
<dbReference type="InterPro" id="IPR001609">
    <property type="entry name" value="Myosin_head_motor_dom-like"/>
</dbReference>
<dbReference type="InterPro" id="IPR004009">
    <property type="entry name" value="Myosin_N"/>
</dbReference>
<dbReference type="InterPro" id="IPR037975">
    <property type="entry name" value="MyosinXI_CBD"/>
</dbReference>
<dbReference type="InterPro" id="IPR036018">
    <property type="entry name" value="MYSc_Myo11"/>
</dbReference>
<dbReference type="InterPro" id="IPR027417">
    <property type="entry name" value="P-loop_NTPase"/>
</dbReference>
<dbReference type="PANTHER" id="PTHR13140">
    <property type="entry name" value="MYOSIN"/>
    <property type="match status" value="1"/>
</dbReference>
<dbReference type="PANTHER" id="PTHR13140:SF735">
    <property type="entry name" value="MYOSIN-5"/>
    <property type="match status" value="1"/>
</dbReference>
<dbReference type="Pfam" id="PF01843">
    <property type="entry name" value="DIL"/>
    <property type="match status" value="1"/>
</dbReference>
<dbReference type="Pfam" id="PF00612">
    <property type="entry name" value="IQ"/>
    <property type="match status" value="5"/>
</dbReference>
<dbReference type="Pfam" id="PF00063">
    <property type="entry name" value="Myosin_head"/>
    <property type="match status" value="1"/>
</dbReference>
<dbReference type="Pfam" id="PF02736">
    <property type="entry name" value="Myosin_N"/>
    <property type="match status" value="1"/>
</dbReference>
<dbReference type="PRINTS" id="PR00193">
    <property type="entry name" value="MYOSINHEAVY"/>
</dbReference>
<dbReference type="SMART" id="SM01132">
    <property type="entry name" value="DIL"/>
    <property type="match status" value="1"/>
</dbReference>
<dbReference type="SMART" id="SM00015">
    <property type="entry name" value="IQ"/>
    <property type="match status" value="6"/>
</dbReference>
<dbReference type="SMART" id="SM00242">
    <property type="entry name" value="MYSc"/>
    <property type="match status" value="1"/>
</dbReference>
<dbReference type="SUPFAM" id="SSF52540">
    <property type="entry name" value="P-loop containing nucleoside triphosphate hydrolases"/>
    <property type="match status" value="2"/>
</dbReference>
<dbReference type="PROSITE" id="PS51126">
    <property type="entry name" value="DILUTE"/>
    <property type="match status" value="1"/>
</dbReference>
<dbReference type="PROSITE" id="PS50096">
    <property type="entry name" value="IQ"/>
    <property type="match status" value="6"/>
</dbReference>
<dbReference type="PROSITE" id="PS51456">
    <property type="entry name" value="MYOSIN_MOTOR"/>
    <property type="match status" value="1"/>
</dbReference>
<dbReference type="PROSITE" id="PS51844">
    <property type="entry name" value="SH3_LIKE"/>
    <property type="match status" value="1"/>
</dbReference>
<name>MYO5_ARATH</name>
<organism>
    <name type="scientific">Arabidopsis thaliana</name>
    <name type="common">Mouse-ear cress</name>
    <dbReference type="NCBI Taxonomy" id="3702"/>
    <lineage>
        <taxon>Eukaryota</taxon>
        <taxon>Viridiplantae</taxon>
        <taxon>Streptophyta</taxon>
        <taxon>Embryophyta</taxon>
        <taxon>Tracheophyta</taxon>
        <taxon>Spermatophyta</taxon>
        <taxon>Magnoliopsida</taxon>
        <taxon>eudicotyledons</taxon>
        <taxon>Gunneridae</taxon>
        <taxon>Pentapetalae</taxon>
        <taxon>rosids</taxon>
        <taxon>malvids</taxon>
        <taxon>Brassicales</taxon>
        <taxon>Brassicaceae</taxon>
        <taxon>Camelineae</taxon>
        <taxon>Arabidopsis</taxon>
    </lineage>
</organism>
<sequence length="1520" mass="172908">MAAPVIIVGSHVWVEDPHLAWIDGEVTRIDGINVHVKTKKGKTVVTNVYFPKDTEAPSGGVDDMTKLSYLHEPGVLRNLETRYELNEIYTYTGNILIAVNPFQRLPHIYETDMMEQYKGIALGELSPHVFAIGDAAYRAMINEGKNNSILVSGESGAGKTETTKMLMRYLAFLGGRSGVEGRTVEQQVLESNPVLEAFGNAKTLRNNNSSRFGKFVEIQFDKNGRISGAAIRTYLLERSRVCQISDPERNYHCFYLLCAAPPEDIKKYKLENPHKFHYLNQSSCYKLDGVDDASEYLETRRAMDVVGISNEEQEAIFRVVAAILHLGNIDFGKGEEIDSSVIKDKDSRSHLNMAAELLMCNAQSLEDALIRRVMVTPEEIITRTLDPDNAIASRDTLAKTIYSHLFDWIVNKINTSIGQDPRSKSIIGVLDIYGFESFKCNSFEQFCINFTNEKLQQHFNQHVFKMEQEEYTKEEIAWSYIEFIDNQDVLELIEKKPGGIISLLDEACMFPKSTHETFSQKLFQTFKEHERFAKPKLSRTDFTISHYAGEVTYQSNHFIDKNKDYIVAEHQALFTASNCKFVAGLFHALHEDSSRSSKFSSIGSRFKQQLHSLMESLNGTEPHYIRCIKPNNVLKPGIFENFNVIHQLRCGGVLEAIRISCAGYPTRLAFYDFLDRFGLLAPEVLEGNYDDKVACQMILDKKSLTDYQIGKTKIFLRAGQMAELDARRAEVLGNAARVIQRQFRTCMARKNYRSIRNAAIVLQSFLRGEIARAVHKKLRIEAAALRVQKNFRRYVDRKSFVTTRSSTIVLQTGLRAMIARSEFRLRRQRKAAIVLQAHWRGRQAFSYYTRLQKAAIVTQCAWRCRLARRELRMLKMAARDTGALKDAKNKLEQRVEELSLRLHLEKRLRTDLEEAKVQEVAKLQEALHTMRLQLKETTAMVVKEQEAARVAIEEASSVNKEPVVVEDTEKIDSLSNEIDRLKGLLSSETHKADEAQHAYQSALVQNEELCKKLEEAGRKIDQLQDSVQRFQEKVFSLESENKVLRQQTLTISPTTRALALRPKTTIIQRTPEKDTFSNGETTQLQEPETEDRPQKSLNQKQQENQELLLKSISEDIGFSEGKPVAACLIYKCLIHWRSFEVERTSIFNRIIETIASAIEMQENSDVLCYWLSNSATLLMFLQRTLKAGATGSITTPRRRGMPSSLFGRVSQSFRGSPQSAGFPFMTGRAIGGGLDELRQVEAKYPALLFKQQLTAFLEKIYGMIRDKMKKEISPLLASCIQVPRTPRSGLVKGRSQNTQNNVVAPKPMIAHWQNIVTCLNGHLRTMRANYVPSLLISKVFGQIFSFINVQLFNSLLLRRECCSFSNGEYVKTGLAELEKWCHDATEEFVGSAWDELKHIRQAVGFLVIHQKPKKSLKEITTELCPVLSIQQLYRISTMYWDDKYGTHSVSTEVIATMRAEVSDVSKSAISNSFLLDDDSSIPFSLDDISKSMQNVEVAEVDPPPLIRQNSNFMFLLERSD</sequence>
<protein>
    <recommendedName>
        <fullName>Myosin-5</fullName>
    </recommendedName>
    <alternativeName>
        <fullName>AtMYA1</fullName>
    </alternativeName>
</protein>
<accession>Q39160</accession>
<accession>Q9LNP7</accession>
<proteinExistence type="evidence at protein level"/>
<comment type="function">
    <text evidence="10 13 14 15 16 17">Myosin heavy chain that is required for the cell cycle-regulated transport of various organelles and proteins for their segregation. Functions by binding with its tail domain to receptor proteins on organelles and exerting force with its N-terminal motor domain against actin filaments, thereby transporting its cargo along polarized actin cables. Contributes to the trafficking of Golgi stacks, mitochondria and peroxisomes. Required for development of pavement cells, trichomes, and stigmatic papillae.</text>
</comment>
<comment type="subunit">
    <text evidence="12 18 19">Homodimer (PubMed:18429938). Interacts with MYOB1 and MYOB2 (PubMed:23995081). Interacts with PHOX1 (PubMed:28096376).</text>
</comment>
<comment type="interaction">
    <interactant intactId="EBI-2010084">
        <id>Q39160</id>
    </interactant>
    <interactant intactId="EBI-2010084">
        <id>Q39160</id>
        <label>XI-1</label>
    </interactant>
    <organismsDiffer>false</organismsDiffer>
    <experiments>4</experiments>
</comment>
<comment type="subcellular location">
    <subcellularLocation>
        <location evidence="8 9">Cytoplasm</location>
    </subcellularLocation>
    <text>Colocalizes with peroxisome, cytoplasmic vesicles and/or organelles.</text>
</comment>
<comment type="domain">
    <text evidence="1">IQ domain mediates interaction with calmodulin.</text>
</comment>
<comment type="domain">
    <text evidence="1">The tail domain is a globular cargo-binding domain.</text>
</comment>
<comment type="disruption phenotype">
    <text evidence="11 13">No visible phenotype.</text>
</comment>
<comment type="similarity">
    <text evidence="20">Belongs to the TRAFAC class myosin-kinesin ATPase superfamily. Myosin family. Plant myosin class XI subfamily.</text>
</comment>
<comment type="sequence caution" evidence="20">
    <conflict type="erroneous gene model prediction">
        <sequence resource="EMBL-CDS" id="AAF79470"/>
    </conflict>
</comment>
<reference key="1">
    <citation type="journal article" date="1994" name="J. Mol. Biol.">
        <title>A myosin from a higher plant has structural similarities to class V myosins.</title>
        <authorList>
            <person name="Kinkema M."/>
            <person name="Schiefelbein J."/>
        </authorList>
    </citation>
    <scope>NUCLEOTIDE SEQUENCE [MRNA]</scope>
    <source>
        <tissue>Etiolated seedling</tissue>
    </source>
</reference>
<reference key="2">
    <citation type="journal article" date="2000" name="Nature">
        <title>Sequence and analysis of chromosome 1 of the plant Arabidopsis thaliana.</title>
        <authorList>
            <person name="Theologis A."/>
            <person name="Ecker J.R."/>
            <person name="Palm C.J."/>
            <person name="Federspiel N.A."/>
            <person name="Kaul S."/>
            <person name="White O."/>
            <person name="Alonso J."/>
            <person name="Altafi H."/>
            <person name="Araujo R."/>
            <person name="Bowman C.L."/>
            <person name="Brooks S.Y."/>
            <person name="Buehler E."/>
            <person name="Chan A."/>
            <person name="Chao Q."/>
            <person name="Chen H."/>
            <person name="Cheuk R.F."/>
            <person name="Chin C.W."/>
            <person name="Chung M.K."/>
            <person name="Conn L."/>
            <person name="Conway A.B."/>
            <person name="Conway A.R."/>
            <person name="Creasy T.H."/>
            <person name="Dewar K."/>
            <person name="Dunn P."/>
            <person name="Etgu P."/>
            <person name="Feldblyum T.V."/>
            <person name="Feng J.-D."/>
            <person name="Fong B."/>
            <person name="Fujii C.Y."/>
            <person name="Gill J.E."/>
            <person name="Goldsmith A.D."/>
            <person name="Haas B."/>
            <person name="Hansen N.F."/>
            <person name="Hughes B."/>
            <person name="Huizar L."/>
            <person name="Hunter J.L."/>
            <person name="Jenkins J."/>
            <person name="Johnson-Hopson C."/>
            <person name="Khan S."/>
            <person name="Khaykin E."/>
            <person name="Kim C.J."/>
            <person name="Koo H.L."/>
            <person name="Kremenetskaia I."/>
            <person name="Kurtz D.B."/>
            <person name="Kwan A."/>
            <person name="Lam B."/>
            <person name="Langin-Hooper S."/>
            <person name="Lee A."/>
            <person name="Lee J.M."/>
            <person name="Lenz C.A."/>
            <person name="Li J.H."/>
            <person name="Li Y.-P."/>
            <person name="Lin X."/>
            <person name="Liu S.X."/>
            <person name="Liu Z.A."/>
            <person name="Luros J.S."/>
            <person name="Maiti R."/>
            <person name="Marziali A."/>
            <person name="Militscher J."/>
            <person name="Miranda M."/>
            <person name="Nguyen M."/>
            <person name="Nierman W.C."/>
            <person name="Osborne B.I."/>
            <person name="Pai G."/>
            <person name="Peterson J."/>
            <person name="Pham P.K."/>
            <person name="Rizzo M."/>
            <person name="Rooney T."/>
            <person name="Rowley D."/>
            <person name="Sakano H."/>
            <person name="Salzberg S.L."/>
            <person name="Schwartz J.R."/>
            <person name="Shinn P."/>
            <person name="Southwick A.M."/>
            <person name="Sun H."/>
            <person name="Tallon L.J."/>
            <person name="Tambunga G."/>
            <person name="Toriumi M.J."/>
            <person name="Town C.D."/>
            <person name="Utterback T."/>
            <person name="Van Aken S."/>
            <person name="Vaysberg M."/>
            <person name="Vysotskaia V.S."/>
            <person name="Walker M."/>
            <person name="Wu D."/>
            <person name="Yu G."/>
            <person name="Fraser C.M."/>
            <person name="Venter J.C."/>
            <person name="Davis R.W."/>
        </authorList>
    </citation>
    <scope>NUCLEOTIDE SEQUENCE [LARGE SCALE GENOMIC DNA]</scope>
    <source>
        <strain>cv. Columbia</strain>
    </source>
</reference>
<reference key="3">
    <citation type="journal article" date="2017" name="Plant J.">
        <title>Araport11: a complete reannotation of the Arabidopsis thaliana reference genome.</title>
        <authorList>
            <person name="Cheng C.Y."/>
            <person name="Krishnakumar V."/>
            <person name="Chan A.P."/>
            <person name="Thibaud-Nissen F."/>
            <person name="Schobel S."/>
            <person name="Town C.D."/>
        </authorList>
    </citation>
    <scope>GENOME REANNOTATION</scope>
    <source>
        <strain>cv. Columbia</strain>
    </source>
</reference>
<reference key="4">
    <citation type="journal article" date="2000" name="J. Cell Sci.">
        <title>A myosin family tree.</title>
        <authorList>
            <person name="Hodge T."/>
            <person name="Cope M.J."/>
        </authorList>
    </citation>
    <scope>GENE FAMILY</scope>
</reference>
<reference key="5">
    <citation type="journal article" date="2001" name="Genome Biol.">
        <title>Analysis of the myosins encoded in the recently completed Arabidopsis thaliana genome sequence.</title>
        <authorList>
            <person name="Reddy A.S."/>
            <person name="Day I.S."/>
        </authorList>
    </citation>
    <scope>GENE FAMILY</scope>
</reference>
<reference key="6">
    <citation type="journal article" date="2007" name="BMC Plant Biol.">
        <title>Association of six YFP-myosin XI-tail fusions with mobile plant cell organelles.</title>
        <authorList>
            <person name="Reisen D."/>
            <person name="Hanson M.R."/>
        </authorList>
    </citation>
    <scope>SUBCELLULAR LOCATION</scope>
</reference>
<reference key="7">
    <citation type="journal article" date="2007" name="J. Biol. Chem.">
        <title>Organelle targeting of myosin XI is mediated by two globular tail subdomains with separate cargo binding sites.</title>
        <authorList>
            <person name="Li J.F."/>
            <person name="Nebenfuehr A."/>
        </authorList>
    </citation>
    <scope>DOMAIN</scope>
    <scope>SUBCELLULAR LOCATION</scope>
</reference>
<reference key="8">
    <citation type="journal article" date="2007" name="Plant Cell Physiol.">
        <title>Enzymatic activity and motility of recombinant Arabidopsis myosin XI, MYA1.</title>
        <authorList>
            <person name="Hachikubo Y."/>
            <person name="Ito K."/>
            <person name="Schiefelbein J."/>
            <person name="Manstein D.J."/>
            <person name="Yamamoto K."/>
        </authorList>
    </citation>
    <scope>FUNCTION</scope>
</reference>
<reference key="9">
    <citation type="journal article" date="2008" name="Plant J.">
        <title>Inter-dependence of dimerization and organelle binding in myosin XI.</title>
        <authorList>
            <person name="Li J.F."/>
            <person name="Nebenfuehr A."/>
        </authorList>
    </citation>
    <scope>DIMERIZATION</scope>
    <scope>COILED COIL</scope>
</reference>
<reference key="10">
    <citation type="journal article" date="2008" name="Plant Physiol.">
        <title>Two class XI myosins function in organelle trafficking and root hair development in Arabidopsis.</title>
        <authorList>
            <person name="Peremyslov V.V."/>
            <person name="Prokhnevsky A.I."/>
            <person name="Avisar D."/>
            <person name="Dolja V.V."/>
        </authorList>
    </citation>
    <scope>DISRUPTION PHENOTYPE</scope>
</reference>
<reference key="11">
    <citation type="journal article" date="2008" name="Proc. Natl. Acad. Sci. U.S.A.">
        <title>Overlapping functions of the four class XI myosins in Arabidopsis growth, root hair elongation, and organelle motility.</title>
        <authorList>
            <person name="Prokhnevsky A.I."/>
            <person name="Peremyslov V.V."/>
            <person name="Dolja V.V."/>
        </authorList>
    </citation>
    <scope>DISRUPTION PHENOTYPE</scope>
    <scope>FUNCTION</scope>
</reference>
<reference key="12">
    <citation type="journal article" date="2009" name="Plant Physiol.">
        <title>A comparative study of the involvement of 17 Arabidopsis myosin family members on the motility of Golgi and other organelles.</title>
        <authorList>
            <person name="Avisar D."/>
            <person name="Abu-Abied M."/>
            <person name="Belausov E."/>
            <person name="Sadot E."/>
            <person name="Hawes C."/>
            <person name="Sparkes I.A."/>
        </authorList>
    </citation>
    <scope>FUNCTION</scope>
</reference>
<reference key="13">
    <citation type="journal article" date="2010" name="Plant Cell">
        <title>Class XI myosins are required for development, cell expansion, and F-Actin organization in Arabidopsis.</title>
        <authorList>
            <person name="Peremyslov V.V."/>
            <person name="Prokhnevsky A.I."/>
            <person name="Dolja V.V."/>
        </authorList>
    </citation>
    <scope>FUNCTION</scope>
</reference>
<reference key="14">
    <citation type="journal article" date="2011" name="Plant Physiol.">
        <title>Expression, splicing, and evolution of the myosin gene family in plants.</title>
        <authorList>
            <person name="Peremyslov V.V."/>
            <person name="Mockler T.C."/>
            <person name="Filichkin S.A."/>
            <person name="Fox S.E."/>
            <person name="Jaiswal P."/>
            <person name="Makarova K.S."/>
            <person name="Koonin E.V."/>
            <person name="Dolja V.V."/>
        </authorList>
    </citation>
    <scope>GENE FAMILY</scope>
    <scope>NOMENCLATURE</scope>
</reference>
<reference key="15">
    <citation type="journal article" date="2012" name="BMC Plant Biol.">
        <title>Myosins XI-K, XI-1, and XI-2 are required for development of pavement cells, trichomes, and stigmatic papillae in Arabidopsis.</title>
        <authorList>
            <person name="Ojangu E.L."/>
            <person name="Tanner K."/>
            <person name="Pata P."/>
            <person name="Jaerve K."/>
            <person name="Holweg C.L."/>
            <person name="Truve E."/>
            <person name="Paves H."/>
        </authorList>
    </citation>
    <scope>FUNCTION</scope>
</reference>
<reference key="16">
    <citation type="journal article" date="2012" name="J. Exp. Bot.">
        <title>Myosin XIK is a major player in cytoplasm dynamics and is regulated by two amino acids in its tail.</title>
        <authorList>
            <person name="Avisar D."/>
            <person name="Abu-Abied M."/>
            <person name="Belausov E."/>
            <person name="Sadot E."/>
        </authorList>
    </citation>
    <scope>FUNCTION</scope>
</reference>
<reference key="17">
    <citation type="journal article" date="2013" name="Plant Cell">
        <title>Identification of myosin XI receptors in Arabidopsis defines a distinct class of transport vesicles.</title>
        <authorList>
            <person name="Peremyslov V.V."/>
            <person name="Morgun E.A."/>
            <person name="Kurth E.G."/>
            <person name="Makarova K.S."/>
            <person name="Koonin E.V."/>
            <person name="Dolja V.V."/>
        </authorList>
    </citation>
    <scope>INTERACTION WITH MYOB1 AND MYOB2</scope>
</reference>
<reference key="18">
    <citation type="journal article" date="2017" name="Proc. Natl. Acad. Sci. U.S.A.">
        <title>Myosin-driven transport network in plants.</title>
        <authorList>
            <person name="Kurth E.G."/>
            <person name="Peremyslov V.V."/>
            <person name="Turner H.L."/>
            <person name="Makarova K.S."/>
            <person name="Iranzo J."/>
            <person name="Mekhedov S.L."/>
            <person name="Koonin E.V."/>
            <person name="Dolja V.V."/>
        </authorList>
    </citation>
    <scope>INTERACTION WITH PHOX1</scope>
</reference>